<name>OAT_GEOSW</name>
<evidence type="ECO:0000255" key="1">
    <source>
        <dbReference type="HAMAP-Rule" id="MF_01689"/>
    </source>
</evidence>
<organism>
    <name type="scientific">Geobacillus sp. (strain WCH70)</name>
    <dbReference type="NCBI Taxonomy" id="471223"/>
    <lineage>
        <taxon>Bacteria</taxon>
        <taxon>Bacillati</taxon>
        <taxon>Bacillota</taxon>
        <taxon>Bacilli</taxon>
        <taxon>Bacillales</taxon>
        <taxon>Anoxybacillaceae</taxon>
        <taxon>Geobacillus</taxon>
    </lineage>
</organism>
<protein>
    <recommendedName>
        <fullName evidence="1">Ornithine aminotransferase</fullName>
        <shortName evidence="1">OAT</shortName>
        <ecNumber evidence="1">2.6.1.13</ecNumber>
    </recommendedName>
    <alternativeName>
        <fullName evidence="1">Ornithine--oxo-acid aminotransferase</fullName>
    </alternativeName>
</protein>
<comment type="function">
    <text evidence="1">Catalyzes the interconversion of ornithine to glutamate semialdehyde.</text>
</comment>
<comment type="catalytic activity">
    <reaction evidence="1">
        <text>a 2-oxocarboxylate + L-ornithine = L-glutamate 5-semialdehyde + an L-alpha-amino acid</text>
        <dbReference type="Rhea" id="RHEA:13877"/>
        <dbReference type="ChEBI" id="CHEBI:35179"/>
        <dbReference type="ChEBI" id="CHEBI:46911"/>
        <dbReference type="ChEBI" id="CHEBI:58066"/>
        <dbReference type="ChEBI" id="CHEBI:59869"/>
        <dbReference type="EC" id="2.6.1.13"/>
    </reaction>
</comment>
<comment type="cofactor">
    <cofactor evidence="1">
        <name>pyridoxal 5'-phosphate</name>
        <dbReference type="ChEBI" id="CHEBI:597326"/>
    </cofactor>
</comment>
<comment type="pathway">
    <text evidence="1">Amino-acid biosynthesis; L-proline biosynthesis; L-glutamate 5-semialdehyde from L-ornithine: step 1/1.</text>
</comment>
<comment type="subcellular location">
    <subcellularLocation>
        <location evidence="1">Cytoplasm</location>
    </subcellularLocation>
</comment>
<comment type="similarity">
    <text evidence="1">Belongs to the class-III pyridoxal-phosphate-dependent aminotransferase family. OAT subfamily.</text>
</comment>
<dbReference type="EC" id="2.6.1.13" evidence="1"/>
<dbReference type="EMBL" id="CP001638">
    <property type="protein sequence ID" value="ACS23579.1"/>
    <property type="molecule type" value="Genomic_DNA"/>
</dbReference>
<dbReference type="SMR" id="C5D6R2"/>
<dbReference type="STRING" id="471223.GWCH70_0686"/>
<dbReference type="KEGG" id="gwc:GWCH70_0686"/>
<dbReference type="eggNOG" id="COG4992">
    <property type="taxonomic scope" value="Bacteria"/>
</dbReference>
<dbReference type="HOGENOM" id="CLU_016922_10_3_9"/>
<dbReference type="OrthoDB" id="9807885at2"/>
<dbReference type="UniPathway" id="UPA00098">
    <property type="reaction ID" value="UER00358"/>
</dbReference>
<dbReference type="GO" id="GO:0005737">
    <property type="term" value="C:cytoplasm"/>
    <property type="evidence" value="ECO:0007669"/>
    <property type="project" value="UniProtKB-SubCell"/>
</dbReference>
<dbReference type="GO" id="GO:0042802">
    <property type="term" value="F:identical protein binding"/>
    <property type="evidence" value="ECO:0007669"/>
    <property type="project" value="TreeGrafter"/>
</dbReference>
<dbReference type="GO" id="GO:0004587">
    <property type="term" value="F:ornithine aminotransferase activity"/>
    <property type="evidence" value="ECO:0007669"/>
    <property type="project" value="UniProtKB-UniRule"/>
</dbReference>
<dbReference type="GO" id="GO:0030170">
    <property type="term" value="F:pyridoxal phosphate binding"/>
    <property type="evidence" value="ECO:0007669"/>
    <property type="project" value="UniProtKB-UniRule"/>
</dbReference>
<dbReference type="GO" id="GO:0055129">
    <property type="term" value="P:L-proline biosynthetic process"/>
    <property type="evidence" value="ECO:0007669"/>
    <property type="project" value="UniProtKB-UniRule"/>
</dbReference>
<dbReference type="CDD" id="cd00610">
    <property type="entry name" value="OAT_like"/>
    <property type="match status" value="1"/>
</dbReference>
<dbReference type="FunFam" id="3.40.640.10:FF:000011">
    <property type="entry name" value="Ornithine aminotransferase"/>
    <property type="match status" value="1"/>
</dbReference>
<dbReference type="Gene3D" id="3.90.1150.10">
    <property type="entry name" value="Aspartate Aminotransferase, domain 1"/>
    <property type="match status" value="1"/>
</dbReference>
<dbReference type="Gene3D" id="3.40.640.10">
    <property type="entry name" value="Type I PLP-dependent aspartate aminotransferase-like (Major domain)"/>
    <property type="match status" value="1"/>
</dbReference>
<dbReference type="HAMAP" id="MF_01689">
    <property type="entry name" value="Ornith_aminotrans_3"/>
    <property type="match status" value="1"/>
</dbReference>
<dbReference type="InterPro" id="IPR005814">
    <property type="entry name" value="Aminotrans_3"/>
</dbReference>
<dbReference type="InterPro" id="IPR049704">
    <property type="entry name" value="Aminotrans_3_PPA_site"/>
</dbReference>
<dbReference type="InterPro" id="IPR050103">
    <property type="entry name" value="Class-III_PLP-dep_AT"/>
</dbReference>
<dbReference type="InterPro" id="IPR010164">
    <property type="entry name" value="Orn_aminotrans"/>
</dbReference>
<dbReference type="InterPro" id="IPR034757">
    <property type="entry name" value="Ornith_aminotrans_bact"/>
</dbReference>
<dbReference type="InterPro" id="IPR015424">
    <property type="entry name" value="PyrdxlP-dep_Trfase"/>
</dbReference>
<dbReference type="InterPro" id="IPR015421">
    <property type="entry name" value="PyrdxlP-dep_Trfase_major"/>
</dbReference>
<dbReference type="InterPro" id="IPR015422">
    <property type="entry name" value="PyrdxlP-dep_Trfase_small"/>
</dbReference>
<dbReference type="NCBIfam" id="TIGR01885">
    <property type="entry name" value="Orn_aminotrans"/>
    <property type="match status" value="1"/>
</dbReference>
<dbReference type="NCBIfam" id="NF003145">
    <property type="entry name" value="PRK04073.1"/>
    <property type="match status" value="1"/>
</dbReference>
<dbReference type="PANTHER" id="PTHR11986">
    <property type="entry name" value="AMINOTRANSFERASE CLASS III"/>
    <property type="match status" value="1"/>
</dbReference>
<dbReference type="PANTHER" id="PTHR11986:SF18">
    <property type="entry name" value="ORNITHINE AMINOTRANSFERASE, MITOCHONDRIAL"/>
    <property type="match status" value="1"/>
</dbReference>
<dbReference type="Pfam" id="PF00202">
    <property type="entry name" value="Aminotran_3"/>
    <property type="match status" value="1"/>
</dbReference>
<dbReference type="PIRSF" id="PIRSF000521">
    <property type="entry name" value="Transaminase_4ab_Lys_Orn"/>
    <property type="match status" value="1"/>
</dbReference>
<dbReference type="SUPFAM" id="SSF53383">
    <property type="entry name" value="PLP-dependent transferases"/>
    <property type="match status" value="1"/>
</dbReference>
<dbReference type="PROSITE" id="PS00600">
    <property type="entry name" value="AA_TRANSFER_CLASS_3"/>
    <property type="match status" value="1"/>
</dbReference>
<keyword id="KW-0028">Amino-acid biosynthesis</keyword>
<keyword id="KW-0032">Aminotransferase</keyword>
<keyword id="KW-0963">Cytoplasm</keyword>
<keyword id="KW-0641">Proline biosynthesis</keyword>
<keyword id="KW-0663">Pyridoxal phosphate</keyword>
<keyword id="KW-0808">Transferase</keyword>
<sequence length="398" mass="44041">MSKTTEIIRLTEQYGANNYHPLPVVLTKGEGVWVEDPEGNRYMDMLSAYSAVNQGHRHPKIIQALKEQADRITLTSRAFHNDQLGPWYEKVAKLTGKDMVLPMNTGAEAVETAFKAARRWAYDVKGVEKDKAEIIVCENNFHGRTMAAVSMSSSEEYKRGFGPMLPGIKIIPYGDVEALKKAITPNTAAFIFEPIQGEAGINIPPEGFLKEAYNVCKENNVLYIADEIQSGLGRSGKMFACDWENVVPDMYILGKALGGGVFPISCVAANRDILGVFNPGSHGSTFGGNPLACAVSIAALDVIIEEKLPERSLELGNYFIEKLREIQHPDIKEVRGRGLFIGVELHTSARPYCEKLKQEGLLCKETHDTVIRFAPPLVITKEELDWAIERVKKVFAGV</sequence>
<gene>
    <name evidence="1" type="primary">rocD</name>
    <name type="ordered locus">GWCH70_0686</name>
</gene>
<feature type="chain" id="PRO_1000215920" description="Ornithine aminotransferase">
    <location>
        <begin position="1"/>
        <end position="398"/>
    </location>
</feature>
<feature type="modified residue" description="N6-(pyridoxal phosphate)lysine" evidence="1">
    <location>
        <position position="255"/>
    </location>
</feature>
<reference key="1">
    <citation type="submission" date="2009-06" db="EMBL/GenBank/DDBJ databases">
        <title>Complete sequence of chromosome of Geopacillus sp. WCH70.</title>
        <authorList>
            <consortium name="US DOE Joint Genome Institute"/>
            <person name="Lucas S."/>
            <person name="Copeland A."/>
            <person name="Lapidus A."/>
            <person name="Glavina del Rio T."/>
            <person name="Dalin E."/>
            <person name="Tice H."/>
            <person name="Bruce D."/>
            <person name="Goodwin L."/>
            <person name="Pitluck S."/>
            <person name="Chertkov O."/>
            <person name="Brettin T."/>
            <person name="Detter J.C."/>
            <person name="Han C."/>
            <person name="Larimer F."/>
            <person name="Land M."/>
            <person name="Hauser L."/>
            <person name="Kyrpides N."/>
            <person name="Mikhailova N."/>
            <person name="Brumm P."/>
            <person name="Mead D.A."/>
            <person name="Richardson P."/>
        </authorList>
    </citation>
    <scope>NUCLEOTIDE SEQUENCE [LARGE SCALE GENOMIC DNA]</scope>
    <source>
        <strain>WCH70</strain>
    </source>
</reference>
<accession>C5D6R2</accession>
<proteinExistence type="inferred from homology"/>